<name>COAA_ECOUT</name>
<comment type="catalytic activity">
    <reaction evidence="1">
        <text>(R)-pantothenate + ATP = (R)-4'-phosphopantothenate + ADP + H(+)</text>
        <dbReference type="Rhea" id="RHEA:16373"/>
        <dbReference type="ChEBI" id="CHEBI:10986"/>
        <dbReference type="ChEBI" id="CHEBI:15378"/>
        <dbReference type="ChEBI" id="CHEBI:29032"/>
        <dbReference type="ChEBI" id="CHEBI:30616"/>
        <dbReference type="ChEBI" id="CHEBI:456216"/>
        <dbReference type="EC" id="2.7.1.33"/>
    </reaction>
</comment>
<comment type="pathway">
    <text evidence="1">Cofactor biosynthesis; coenzyme A biosynthesis; CoA from (R)-pantothenate: step 1/5.</text>
</comment>
<comment type="subcellular location">
    <subcellularLocation>
        <location evidence="1">Cytoplasm</location>
    </subcellularLocation>
</comment>
<comment type="similarity">
    <text evidence="1">Belongs to the prokaryotic pantothenate kinase family.</text>
</comment>
<comment type="sequence caution" evidence="2">
    <conflict type="erroneous initiation">
        <sequence resource="EMBL-CDS" id="ABE09235"/>
    </conflict>
</comment>
<accession>Q1R5X9</accession>
<evidence type="ECO:0000255" key="1">
    <source>
        <dbReference type="HAMAP-Rule" id="MF_00215"/>
    </source>
</evidence>
<evidence type="ECO:0000305" key="2"/>
<proteinExistence type="inferred from homology"/>
<dbReference type="EC" id="2.7.1.33" evidence="1"/>
<dbReference type="EMBL" id="CP000243">
    <property type="protein sequence ID" value="ABE09235.1"/>
    <property type="status" value="ALT_INIT"/>
    <property type="molecule type" value="Genomic_DNA"/>
</dbReference>
<dbReference type="RefSeq" id="WP_000023081.1">
    <property type="nucleotide sequence ID" value="NZ_CP064825.1"/>
</dbReference>
<dbReference type="SMR" id="Q1R5X9"/>
<dbReference type="GeneID" id="93777919"/>
<dbReference type="KEGG" id="eci:UTI89_C3802"/>
<dbReference type="HOGENOM" id="CLU_053818_1_1_6"/>
<dbReference type="UniPathway" id="UPA00241">
    <property type="reaction ID" value="UER00352"/>
</dbReference>
<dbReference type="Proteomes" id="UP000001952">
    <property type="component" value="Chromosome"/>
</dbReference>
<dbReference type="GO" id="GO:0005737">
    <property type="term" value="C:cytoplasm"/>
    <property type="evidence" value="ECO:0007669"/>
    <property type="project" value="UniProtKB-SubCell"/>
</dbReference>
<dbReference type="GO" id="GO:0005524">
    <property type="term" value="F:ATP binding"/>
    <property type="evidence" value="ECO:0007669"/>
    <property type="project" value="UniProtKB-UniRule"/>
</dbReference>
<dbReference type="GO" id="GO:0004594">
    <property type="term" value="F:pantothenate kinase activity"/>
    <property type="evidence" value="ECO:0007669"/>
    <property type="project" value="UniProtKB-UniRule"/>
</dbReference>
<dbReference type="GO" id="GO:0015937">
    <property type="term" value="P:coenzyme A biosynthetic process"/>
    <property type="evidence" value="ECO:0007669"/>
    <property type="project" value="UniProtKB-UniRule"/>
</dbReference>
<dbReference type="CDD" id="cd02025">
    <property type="entry name" value="PanK"/>
    <property type="match status" value="1"/>
</dbReference>
<dbReference type="FunFam" id="3.40.50.300:FF:000242">
    <property type="entry name" value="Pantothenate kinase"/>
    <property type="match status" value="1"/>
</dbReference>
<dbReference type="Gene3D" id="3.40.50.300">
    <property type="entry name" value="P-loop containing nucleotide triphosphate hydrolases"/>
    <property type="match status" value="1"/>
</dbReference>
<dbReference type="HAMAP" id="MF_00215">
    <property type="entry name" value="Pantothen_kinase_1"/>
    <property type="match status" value="1"/>
</dbReference>
<dbReference type="InterPro" id="IPR027417">
    <property type="entry name" value="P-loop_NTPase"/>
</dbReference>
<dbReference type="InterPro" id="IPR004566">
    <property type="entry name" value="PanK"/>
</dbReference>
<dbReference type="InterPro" id="IPR006083">
    <property type="entry name" value="PRK/URK"/>
</dbReference>
<dbReference type="NCBIfam" id="TIGR00554">
    <property type="entry name" value="panK_bact"/>
    <property type="match status" value="1"/>
</dbReference>
<dbReference type="PANTHER" id="PTHR10285">
    <property type="entry name" value="URIDINE KINASE"/>
    <property type="match status" value="1"/>
</dbReference>
<dbReference type="Pfam" id="PF00485">
    <property type="entry name" value="PRK"/>
    <property type="match status" value="1"/>
</dbReference>
<dbReference type="PIRSF" id="PIRSF000545">
    <property type="entry name" value="Pantothenate_kin"/>
    <property type="match status" value="1"/>
</dbReference>
<dbReference type="SUPFAM" id="SSF52540">
    <property type="entry name" value="P-loop containing nucleoside triphosphate hydrolases"/>
    <property type="match status" value="1"/>
</dbReference>
<reference key="1">
    <citation type="journal article" date="2006" name="Proc. Natl. Acad. Sci. U.S.A.">
        <title>Identification of genes subject to positive selection in uropathogenic strains of Escherichia coli: a comparative genomics approach.</title>
        <authorList>
            <person name="Chen S.L."/>
            <person name="Hung C.-S."/>
            <person name="Xu J."/>
            <person name="Reigstad C.S."/>
            <person name="Magrini V."/>
            <person name="Sabo A."/>
            <person name="Blasiar D."/>
            <person name="Bieri T."/>
            <person name="Meyer R.R."/>
            <person name="Ozersky P."/>
            <person name="Armstrong J.R."/>
            <person name="Fulton R.S."/>
            <person name="Latreille J.P."/>
            <person name="Spieth J."/>
            <person name="Hooton T.M."/>
            <person name="Mardis E.R."/>
            <person name="Hultgren S.J."/>
            <person name="Gordon J.I."/>
        </authorList>
    </citation>
    <scope>NUCLEOTIDE SEQUENCE [LARGE SCALE GENOMIC DNA]</scope>
    <source>
        <strain>UTI89 / UPEC</strain>
    </source>
</reference>
<organism>
    <name type="scientific">Escherichia coli (strain UTI89 / UPEC)</name>
    <dbReference type="NCBI Taxonomy" id="364106"/>
    <lineage>
        <taxon>Bacteria</taxon>
        <taxon>Pseudomonadati</taxon>
        <taxon>Pseudomonadota</taxon>
        <taxon>Gammaproteobacteria</taxon>
        <taxon>Enterobacterales</taxon>
        <taxon>Enterobacteriaceae</taxon>
        <taxon>Escherichia</taxon>
    </lineage>
</organism>
<feature type="chain" id="PRO_0000325552" description="Pantothenate kinase">
    <location>
        <begin position="1"/>
        <end position="316"/>
    </location>
</feature>
<feature type="binding site" evidence="1">
    <location>
        <begin position="95"/>
        <end position="102"/>
    </location>
    <ligand>
        <name>ATP</name>
        <dbReference type="ChEBI" id="CHEBI:30616"/>
    </ligand>
</feature>
<gene>
    <name evidence="1" type="primary">coaA</name>
    <name type="ordered locus">UTI89_C3802</name>
</gene>
<keyword id="KW-0067">ATP-binding</keyword>
<keyword id="KW-0173">Coenzyme A biosynthesis</keyword>
<keyword id="KW-0963">Cytoplasm</keyword>
<keyword id="KW-0418">Kinase</keyword>
<keyword id="KW-0547">Nucleotide-binding</keyword>
<keyword id="KW-0808">Transferase</keyword>
<sequence length="316" mass="36360">MSIKEQTLMTPYLQFDRNQWAALRDSVPMTLSEDEIARLKGINEDLSLEEVAEIYLPLSRLLNFYISSNLRRQAVLEQFLGTNGQRIPYIISIAGSVAVGKSTTARVLQALLSRWPEHRRVELITTDGFLHPNQVLKERGLMKKKGFPESYDMHRLVKFVSDLKSGVPNVTAPVYSHLIYDVIPDGDKTVVQPDILILEGLNVLQSGMDYPHDPHHVFVSDFVDFSIYVDAPEDLLQTWYINRFLKFREGAFTDPDSYFHNYAKLTKEEAIKTAMTLWKEINWLNLKQNILPTRERASLILTKSANHAVEEVRLRK</sequence>
<protein>
    <recommendedName>
        <fullName evidence="1">Pantothenate kinase</fullName>
        <ecNumber evidence="1">2.7.1.33</ecNumber>
    </recommendedName>
    <alternativeName>
        <fullName evidence="1">Pantothenic acid kinase</fullName>
    </alternativeName>
</protein>